<comment type="function">
    <text evidence="1">Catalyzes two activities which are involved in the cyclic version of arginine biosynthesis: the synthesis of acetylglutamate from glutamate and acetyl-CoA, and of ornithine by transacetylation between acetylornithine and glutamate.</text>
</comment>
<comment type="catalytic activity">
    <reaction evidence="1">
        <text>N(2)-acetyl-L-ornithine + L-glutamate = N-acetyl-L-glutamate + L-ornithine</text>
        <dbReference type="Rhea" id="RHEA:15349"/>
        <dbReference type="ChEBI" id="CHEBI:29985"/>
        <dbReference type="ChEBI" id="CHEBI:44337"/>
        <dbReference type="ChEBI" id="CHEBI:46911"/>
        <dbReference type="ChEBI" id="CHEBI:57805"/>
        <dbReference type="EC" id="2.3.1.35"/>
    </reaction>
</comment>
<comment type="catalytic activity">
    <reaction evidence="1">
        <text>L-glutamate + acetyl-CoA = N-acetyl-L-glutamate + CoA + H(+)</text>
        <dbReference type="Rhea" id="RHEA:24292"/>
        <dbReference type="ChEBI" id="CHEBI:15378"/>
        <dbReference type="ChEBI" id="CHEBI:29985"/>
        <dbReference type="ChEBI" id="CHEBI:44337"/>
        <dbReference type="ChEBI" id="CHEBI:57287"/>
        <dbReference type="ChEBI" id="CHEBI:57288"/>
        <dbReference type="EC" id="2.3.1.1"/>
    </reaction>
</comment>
<comment type="pathway">
    <text evidence="1">Amino-acid biosynthesis; L-arginine biosynthesis; L-ornithine and N-acetyl-L-glutamate from L-glutamate and N(2)-acetyl-L-ornithine (cyclic): step 1/1.</text>
</comment>
<comment type="pathway">
    <text evidence="1">Amino-acid biosynthesis; L-arginine biosynthesis; N(2)-acetyl-L-ornithine from L-glutamate: step 1/4.</text>
</comment>
<comment type="subunit">
    <text evidence="1">Heterodimer of an alpha and a beta chain.</text>
</comment>
<comment type="subcellular location">
    <subcellularLocation>
        <location evidence="1">Plastid</location>
        <location evidence="1">Chloroplast</location>
    </subcellularLocation>
</comment>
<comment type="miscellaneous">
    <text evidence="1">This protein may be expected to contain an N-terminal transit peptide but none has been predicted.</text>
</comment>
<comment type="similarity">
    <text evidence="1">Belongs to the ArgJ family.</text>
</comment>
<accession>B9SZB6</accession>
<protein>
    <recommendedName>
        <fullName evidence="1">Arginine biosynthesis bifunctional protein ArgJ, chloroplastic</fullName>
    </recommendedName>
    <domain>
        <recommendedName>
            <fullName evidence="1">Glutamate N-acetyltransferase</fullName>
            <shortName evidence="1">GAT</shortName>
            <ecNumber evidence="1">2.3.1.35</ecNumber>
        </recommendedName>
        <alternativeName>
            <fullName evidence="1">Ornithine acetyltransferase</fullName>
            <shortName evidence="1">OATase</shortName>
        </alternativeName>
        <alternativeName>
            <fullName evidence="1">Ornithine transacetylase</fullName>
        </alternativeName>
    </domain>
    <domain>
        <recommendedName>
            <fullName evidence="1">Amino-acid acetyltransferase</fullName>
            <ecNumber evidence="1">2.3.1.1</ecNumber>
        </recommendedName>
        <alternativeName>
            <fullName evidence="1">N-acetylglutamate synthase</fullName>
            <shortName evidence="1">AGS</shortName>
        </alternativeName>
    </domain>
    <component>
        <recommendedName>
            <fullName evidence="1">Arginine biosynthesis bifunctional protein ArgJ alpha chain</fullName>
        </recommendedName>
    </component>
    <component>
        <recommendedName>
            <fullName evidence="1">Arginine biosynthesis bifunctional protein ArgJ beta chain</fullName>
        </recommendedName>
    </component>
</protein>
<evidence type="ECO:0000255" key="1">
    <source>
        <dbReference type="HAMAP-Rule" id="MF_03124"/>
    </source>
</evidence>
<reference key="1">
    <citation type="journal article" date="2010" name="Nat. Biotechnol.">
        <title>Draft genome sequence of the oilseed species Ricinus communis.</title>
        <authorList>
            <person name="Chan A.P."/>
            <person name="Crabtree J."/>
            <person name="Zhao Q."/>
            <person name="Lorenzi H."/>
            <person name="Orvis J."/>
            <person name="Puiu D."/>
            <person name="Melake-Berhan A."/>
            <person name="Jones K.M."/>
            <person name="Redman J."/>
            <person name="Chen G."/>
            <person name="Cahoon E.B."/>
            <person name="Gedil M."/>
            <person name="Stanke M."/>
            <person name="Haas B.J."/>
            <person name="Wortman J.R."/>
            <person name="Fraser-Liggett C.M."/>
            <person name="Ravel J."/>
            <person name="Rabinowicz P.D."/>
        </authorList>
    </citation>
    <scope>NUCLEOTIDE SEQUENCE [LARGE SCALE GENOMIC DNA]</scope>
    <source>
        <strain>cv. Hale</strain>
    </source>
</reference>
<sequence>MYTCAPHFVSIKFPDLHSSKTLRPFGMSKREFKVFALASSVNEASNYIPAAPILIPEGPWNQIPGGVTAAKGFKAVGIYGGLRAKGEKPDLALVTCDVDAAAAGSFTTNMVAAAPVLYCKHALDISQTARAVLINAGQANAATGDAGYQDVLECADTVAMMLKVKREEVLIESTGVIGQRIKKDALLNALPTLVNSLTSSVEGAGSAAVAITTTDLVSKSVAIESQIGGINIRVGGMAKGSGMIHPNMATMLGVITTDALVQTDVWRKMVQTAVNRSFNQITVDGDTSTNDTVIALASGLSGSMSISSIDCTRAIQLQACLDAVMQGLAKSIAWDGEGATCLIEVTVAGTESEVKAAKIARSVASSSLVKAAVYGRDPNWGRIAAAAGYAGIPFHQNKLRILLGDILLMDNGQPLAFDRPAASKYLKMAGETHGTVKIYISVGDGSGIGKAWGCDLSYDYVKINAEYTT</sequence>
<name>ARGJ_RICCO</name>
<gene>
    <name type="ORF">RCOM_1202350</name>
</gene>
<dbReference type="EC" id="2.3.1.35" evidence="1"/>
<dbReference type="EC" id="2.3.1.1" evidence="1"/>
<dbReference type="EMBL" id="EQ974271">
    <property type="protein sequence ID" value="EEF31042.1"/>
    <property type="molecule type" value="Genomic_DNA"/>
</dbReference>
<dbReference type="SMR" id="B9SZB6"/>
<dbReference type="FunCoup" id="B9SZB6">
    <property type="interactions" value="1118"/>
</dbReference>
<dbReference type="STRING" id="3988.B9SZB6"/>
<dbReference type="MEROPS" id="T05.002"/>
<dbReference type="KEGG" id="rcu:8269377"/>
<dbReference type="eggNOG" id="KOG2786">
    <property type="taxonomic scope" value="Eukaryota"/>
</dbReference>
<dbReference type="InParanoid" id="B9SZB6"/>
<dbReference type="OMA" id="WGRIVMA"/>
<dbReference type="OrthoDB" id="2017946at2759"/>
<dbReference type="UniPathway" id="UPA00068">
    <property type="reaction ID" value="UER00106"/>
</dbReference>
<dbReference type="UniPathway" id="UPA00068">
    <property type="reaction ID" value="UER00111"/>
</dbReference>
<dbReference type="Proteomes" id="UP000008311">
    <property type="component" value="Unassembled WGS sequence"/>
</dbReference>
<dbReference type="GO" id="GO:0009507">
    <property type="term" value="C:chloroplast"/>
    <property type="evidence" value="ECO:0007669"/>
    <property type="project" value="UniProtKB-SubCell"/>
</dbReference>
<dbReference type="GO" id="GO:0004358">
    <property type="term" value="F:glutamate N-acetyltransferase activity"/>
    <property type="evidence" value="ECO:0007669"/>
    <property type="project" value="UniProtKB-UniRule"/>
</dbReference>
<dbReference type="GO" id="GO:0004042">
    <property type="term" value="F:L-glutamate N-acetyltransferase activity"/>
    <property type="evidence" value="ECO:0000318"/>
    <property type="project" value="GO_Central"/>
</dbReference>
<dbReference type="GO" id="GO:0006526">
    <property type="term" value="P:L-arginine biosynthetic process"/>
    <property type="evidence" value="ECO:0007669"/>
    <property type="project" value="UniProtKB-UniRule"/>
</dbReference>
<dbReference type="GO" id="GO:0006592">
    <property type="term" value="P:ornithine biosynthetic process"/>
    <property type="evidence" value="ECO:0000318"/>
    <property type="project" value="GO_Central"/>
</dbReference>
<dbReference type="CDD" id="cd02152">
    <property type="entry name" value="OAT"/>
    <property type="match status" value="1"/>
</dbReference>
<dbReference type="FunFam" id="3.10.20.340:FF:000001">
    <property type="entry name" value="Arginine biosynthesis bifunctional protein ArgJ, chloroplastic"/>
    <property type="match status" value="1"/>
</dbReference>
<dbReference type="FunFam" id="3.60.70.12:FF:000001">
    <property type="entry name" value="Arginine biosynthesis bifunctional protein ArgJ, chloroplastic"/>
    <property type="match status" value="1"/>
</dbReference>
<dbReference type="Gene3D" id="3.10.20.340">
    <property type="entry name" value="ArgJ beta chain, C-terminal domain"/>
    <property type="match status" value="1"/>
</dbReference>
<dbReference type="Gene3D" id="3.60.70.12">
    <property type="entry name" value="L-amino peptidase D-ALA esterase/amidase"/>
    <property type="match status" value="1"/>
</dbReference>
<dbReference type="HAMAP" id="MF_01106">
    <property type="entry name" value="ArgJ"/>
    <property type="match status" value="1"/>
</dbReference>
<dbReference type="InterPro" id="IPR002813">
    <property type="entry name" value="Arg_biosynth_ArgJ"/>
</dbReference>
<dbReference type="InterPro" id="IPR016117">
    <property type="entry name" value="ArgJ-like_dom_sf"/>
</dbReference>
<dbReference type="InterPro" id="IPR042195">
    <property type="entry name" value="ArgJ_beta_C"/>
</dbReference>
<dbReference type="NCBIfam" id="TIGR00120">
    <property type="entry name" value="ArgJ"/>
    <property type="match status" value="1"/>
</dbReference>
<dbReference type="NCBIfam" id="NF003802">
    <property type="entry name" value="PRK05388.1"/>
    <property type="match status" value="1"/>
</dbReference>
<dbReference type="PANTHER" id="PTHR23100">
    <property type="entry name" value="ARGININE BIOSYNTHESIS BIFUNCTIONAL PROTEIN ARGJ"/>
    <property type="match status" value="1"/>
</dbReference>
<dbReference type="PANTHER" id="PTHR23100:SF0">
    <property type="entry name" value="ARGININE BIOSYNTHESIS BIFUNCTIONAL PROTEIN ARGJ, MITOCHONDRIAL"/>
    <property type="match status" value="1"/>
</dbReference>
<dbReference type="Pfam" id="PF01960">
    <property type="entry name" value="ArgJ"/>
    <property type="match status" value="1"/>
</dbReference>
<dbReference type="SUPFAM" id="SSF56266">
    <property type="entry name" value="DmpA/ArgJ-like"/>
    <property type="match status" value="1"/>
</dbReference>
<keyword id="KW-0012">Acyltransferase</keyword>
<keyword id="KW-0028">Amino-acid biosynthesis</keyword>
<keyword id="KW-0055">Arginine biosynthesis</keyword>
<keyword id="KW-0068">Autocatalytic cleavage</keyword>
<keyword id="KW-0150">Chloroplast</keyword>
<keyword id="KW-0511">Multifunctional enzyme</keyword>
<keyword id="KW-0934">Plastid</keyword>
<keyword id="KW-1185">Reference proteome</keyword>
<keyword id="KW-0808">Transferase</keyword>
<feature type="chain" id="PRO_0000397988" description="Arginine biosynthesis bifunctional protein ArgJ alpha chain" evidence="1">
    <location>
        <begin position="1"/>
        <end position="249"/>
    </location>
</feature>
<feature type="chain" id="PRO_0000397989" description="Arginine biosynthesis bifunctional protein ArgJ beta chain" evidence="1">
    <location>
        <begin position="250"/>
        <end position="469"/>
    </location>
</feature>
<feature type="active site" description="Nucleophile" evidence="1">
    <location>
        <position position="250"/>
    </location>
</feature>
<feature type="binding site" evidence="1">
    <location>
        <position position="213"/>
    </location>
    <ligand>
        <name>substrate</name>
    </ligand>
</feature>
<feature type="binding site" evidence="1">
    <location>
        <position position="239"/>
    </location>
    <ligand>
        <name>substrate</name>
    </ligand>
</feature>
<feature type="binding site" evidence="1">
    <location>
        <position position="250"/>
    </location>
    <ligand>
        <name>substrate</name>
    </ligand>
</feature>
<feature type="binding site" evidence="1">
    <location>
        <position position="337"/>
    </location>
    <ligand>
        <name>substrate</name>
    </ligand>
</feature>
<feature type="binding site" evidence="1">
    <location>
        <position position="464"/>
    </location>
    <ligand>
        <name>substrate</name>
    </ligand>
</feature>
<feature type="binding site" evidence="1">
    <location>
        <position position="469"/>
    </location>
    <ligand>
        <name>substrate</name>
    </ligand>
</feature>
<feature type="site" description="Involved in the stabilization of negative charge on the oxyanion by the formation of the oxyanion hole" evidence="1">
    <location>
        <position position="174"/>
    </location>
</feature>
<feature type="site" description="Involved in the stabilization of negative charge on the oxyanion by the formation of the oxyanion hole" evidence="1">
    <location>
        <position position="175"/>
    </location>
</feature>
<feature type="site" description="Cleavage; by autolysis" evidence="1">
    <location>
        <begin position="249"/>
        <end position="250"/>
    </location>
</feature>
<organism>
    <name type="scientific">Ricinus communis</name>
    <name type="common">Castor bean</name>
    <dbReference type="NCBI Taxonomy" id="3988"/>
    <lineage>
        <taxon>Eukaryota</taxon>
        <taxon>Viridiplantae</taxon>
        <taxon>Streptophyta</taxon>
        <taxon>Embryophyta</taxon>
        <taxon>Tracheophyta</taxon>
        <taxon>Spermatophyta</taxon>
        <taxon>Magnoliopsida</taxon>
        <taxon>eudicotyledons</taxon>
        <taxon>Gunneridae</taxon>
        <taxon>Pentapetalae</taxon>
        <taxon>rosids</taxon>
        <taxon>fabids</taxon>
        <taxon>Malpighiales</taxon>
        <taxon>Euphorbiaceae</taxon>
        <taxon>Acalyphoideae</taxon>
        <taxon>Acalypheae</taxon>
        <taxon>Ricinus</taxon>
    </lineage>
</organism>
<proteinExistence type="inferred from homology"/>